<name>Y029_NPVAC</name>
<organism>
    <name type="scientific">Autographa californica nuclear polyhedrosis virus</name>
    <name type="common">AcMNPV</name>
    <dbReference type="NCBI Taxonomy" id="46015"/>
    <lineage>
        <taxon>Viruses</taxon>
        <taxon>Viruses incertae sedis</taxon>
        <taxon>Naldaviricetes</taxon>
        <taxon>Lefavirales</taxon>
        <taxon>Baculoviridae</taxon>
        <taxon>Alphabaculovirus</taxon>
        <taxon>Alphabaculovirus aucalifornicae</taxon>
    </lineage>
</organism>
<protein>
    <recommendedName>
        <fullName>Uncharacterized 8.6 kDa protein in IAP1-SOD intergenic region</fullName>
    </recommendedName>
</protein>
<keyword id="KW-1185">Reference proteome</keyword>
<accession>P41433</accession>
<organismHost>
    <name type="scientific">Lepidoptera</name>
    <name type="common">butterflies and moths</name>
    <dbReference type="NCBI Taxonomy" id="7088"/>
</organismHost>
<proteinExistence type="predicted"/>
<sequence>MFSRNYNASQSQRDLKSQLEEINRQKQKITIDSQHFEKIKSVTKNVNELQNMEKRVMKSRQNFLNYGIDNF</sequence>
<feature type="chain" id="PRO_0000132968" description="Uncharacterized 8.6 kDa protein in IAP1-SOD intergenic region">
    <location>
        <begin position="1"/>
        <end position="71"/>
    </location>
</feature>
<reference key="1">
    <citation type="journal article" date="1994" name="Virology">
        <title>The complete DNA sequence of Autographa californica nuclear polyhedrosis virus.</title>
        <authorList>
            <person name="Ayres M.D."/>
            <person name="Howard S.C."/>
            <person name="Kuzio J."/>
            <person name="Lopez-Ferber M."/>
            <person name="Possee R.D."/>
        </authorList>
    </citation>
    <scope>NUCLEOTIDE SEQUENCE [LARGE SCALE GENOMIC DNA]</scope>
    <source>
        <strain>C6</strain>
    </source>
</reference>
<dbReference type="EMBL" id="L22858">
    <property type="protein sequence ID" value="AAA66659.1"/>
    <property type="molecule type" value="Genomic_DNA"/>
</dbReference>
<dbReference type="PIR" id="E72853">
    <property type="entry name" value="E72853"/>
</dbReference>
<dbReference type="RefSeq" id="NP_054058.1">
    <property type="nucleotide sequence ID" value="NC_001623.1"/>
</dbReference>
<dbReference type="SMR" id="P41433"/>
<dbReference type="GeneID" id="1403861"/>
<dbReference type="KEGG" id="vg:1403861"/>
<dbReference type="OrthoDB" id="26917at10239"/>
<dbReference type="Proteomes" id="UP000008292">
    <property type="component" value="Segment"/>
</dbReference>
<dbReference type="InterPro" id="IPR009265">
    <property type="entry name" value="AcMNPV_Orf29"/>
</dbReference>
<dbReference type="Pfam" id="PF06034">
    <property type="entry name" value="DUF919"/>
    <property type="match status" value="1"/>
</dbReference>